<organism>
    <name type="scientific">Mus musculus</name>
    <name type="common">Mouse</name>
    <dbReference type="NCBI Taxonomy" id="10090"/>
    <lineage>
        <taxon>Eukaryota</taxon>
        <taxon>Metazoa</taxon>
        <taxon>Chordata</taxon>
        <taxon>Craniata</taxon>
        <taxon>Vertebrata</taxon>
        <taxon>Euteleostomi</taxon>
        <taxon>Mammalia</taxon>
        <taxon>Eutheria</taxon>
        <taxon>Euarchontoglires</taxon>
        <taxon>Glires</taxon>
        <taxon>Rodentia</taxon>
        <taxon>Myomorpha</taxon>
        <taxon>Muroidea</taxon>
        <taxon>Muridae</taxon>
        <taxon>Murinae</taxon>
        <taxon>Mus</taxon>
        <taxon>Mus</taxon>
    </lineage>
</organism>
<name>DCAF5_MOUSE</name>
<keyword id="KW-0597">Phosphoprotein</keyword>
<keyword id="KW-1185">Reference proteome</keyword>
<keyword id="KW-0677">Repeat</keyword>
<keyword id="KW-0833">Ubl conjugation pathway</keyword>
<keyword id="KW-0853">WD repeat</keyword>
<evidence type="ECO:0000250" key="1">
    <source>
        <dbReference type="UniProtKB" id="Q96JK2"/>
    </source>
</evidence>
<evidence type="ECO:0000256" key="2">
    <source>
        <dbReference type="SAM" id="MobiDB-lite"/>
    </source>
</evidence>
<evidence type="ECO:0000269" key="3">
    <source>
    </source>
</evidence>
<evidence type="ECO:0000305" key="4"/>
<evidence type="ECO:0007744" key="5">
    <source>
    </source>
</evidence>
<comment type="function">
    <text evidence="1 3">Is a substrate receptor for the CUL4-DDB1 E3 ubiquitin-protein ligase complex (CRL4), involved in the ubiquitination of a set of methylated non-histone proteins, including SOX2 (PubMed:30442713). The complex CRL4-DCAF5 is also involved in the ubiquitination of methylated DNMT1 and E2F1 (By similarity).</text>
</comment>
<comment type="pathway">
    <text>Protein modification; protein ubiquitination.</text>
</comment>
<comment type="subunit">
    <text evidence="1 3">Interacts with DDB1, CUL4A or CUL4B. Interacts with L3MBTL3 (PubMed:30442713). Interacts with SOX2 (PubMed:30442713). Interacts with DNMT1 (By similarity). Interacts with E2F1 (By similarity).</text>
</comment>
<comment type="sequence caution" evidence="4">
    <conflict type="erroneous initiation">
        <sequence resource="EMBL-CDS" id="BAC65843"/>
    </conflict>
</comment>
<dbReference type="EMBL" id="AK122561">
    <property type="protein sequence ID" value="BAC65843.1"/>
    <property type="status" value="ALT_INIT"/>
    <property type="molecule type" value="mRNA"/>
</dbReference>
<dbReference type="EMBL" id="BC030857">
    <property type="protein sequence ID" value="AAH30857.1"/>
    <property type="molecule type" value="mRNA"/>
</dbReference>
<dbReference type="EMBL" id="BC042567">
    <property type="protein sequence ID" value="AAH42567.1"/>
    <property type="molecule type" value="mRNA"/>
</dbReference>
<dbReference type="EMBL" id="BC046813">
    <property type="protein sequence ID" value="AAH46813.2"/>
    <property type="molecule type" value="mRNA"/>
</dbReference>
<dbReference type="EMBL" id="AK034653">
    <property type="protein sequence ID" value="BAC28784.1"/>
    <property type="molecule type" value="mRNA"/>
</dbReference>
<dbReference type="EMBL" id="AK077889">
    <property type="protein sequence ID" value="BAC37050.1"/>
    <property type="molecule type" value="mRNA"/>
</dbReference>
<dbReference type="CCDS" id="CCDS26013.1"/>
<dbReference type="RefSeq" id="NP_796241.3">
    <property type="nucleotide sequence ID" value="NM_177267.4"/>
</dbReference>
<dbReference type="SMR" id="Q80T85"/>
<dbReference type="BioGRID" id="236308">
    <property type="interactions" value="10"/>
</dbReference>
<dbReference type="FunCoup" id="Q80T85">
    <property type="interactions" value="3656"/>
</dbReference>
<dbReference type="IntAct" id="Q80T85">
    <property type="interactions" value="1"/>
</dbReference>
<dbReference type="STRING" id="10090.ENSMUSP00000052755"/>
<dbReference type="GlyGen" id="Q80T85">
    <property type="glycosylation" value="1 site"/>
</dbReference>
<dbReference type="iPTMnet" id="Q80T85"/>
<dbReference type="PhosphoSitePlus" id="Q80T85"/>
<dbReference type="SwissPalm" id="Q80T85"/>
<dbReference type="PaxDb" id="10090-ENSMUSP00000052755"/>
<dbReference type="ProteomicsDB" id="279882"/>
<dbReference type="Pumba" id="Q80T85"/>
<dbReference type="Antibodypedia" id="54896">
    <property type="antibodies" value="17 antibodies from 9 providers"/>
</dbReference>
<dbReference type="DNASU" id="320808"/>
<dbReference type="Ensembl" id="ENSMUST00000054145.8">
    <property type="protein sequence ID" value="ENSMUSP00000052755.7"/>
    <property type="gene ID" value="ENSMUSG00000049106.8"/>
</dbReference>
<dbReference type="GeneID" id="320808"/>
<dbReference type="KEGG" id="mmu:320808"/>
<dbReference type="UCSC" id="uc007oar.2">
    <property type="organism name" value="mouse"/>
</dbReference>
<dbReference type="AGR" id="MGI:2444785"/>
<dbReference type="CTD" id="8816"/>
<dbReference type="MGI" id="MGI:2444785">
    <property type="gene designation" value="Dcaf5"/>
</dbReference>
<dbReference type="VEuPathDB" id="HostDB:ENSMUSG00000049106"/>
<dbReference type="eggNOG" id="KOG4227">
    <property type="taxonomic scope" value="Eukaryota"/>
</dbReference>
<dbReference type="GeneTree" id="ENSGT00950000182900"/>
<dbReference type="HOGENOM" id="CLU_018663_0_0_1"/>
<dbReference type="InParanoid" id="Q80T85"/>
<dbReference type="OMA" id="NVQEHEC"/>
<dbReference type="OrthoDB" id="5573735at2759"/>
<dbReference type="PhylomeDB" id="Q80T85"/>
<dbReference type="TreeFam" id="TF320710"/>
<dbReference type="Reactome" id="R-MMU-8951664">
    <property type="pathway name" value="Neddylation"/>
</dbReference>
<dbReference type="UniPathway" id="UPA00143"/>
<dbReference type="BioGRID-ORCS" id="320808">
    <property type="hits" value="2 hits in 77 CRISPR screens"/>
</dbReference>
<dbReference type="ChiTaRS" id="Dcaf5">
    <property type="organism name" value="mouse"/>
</dbReference>
<dbReference type="PRO" id="PR:Q80T85"/>
<dbReference type="Proteomes" id="UP000000589">
    <property type="component" value="Chromosome 12"/>
</dbReference>
<dbReference type="RNAct" id="Q80T85">
    <property type="molecule type" value="protein"/>
</dbReference>
<dbReference type="Bgee" id="ENSMUSG00000049106">
    <property type="expression patterns" value="Expressed in supraoptic nucleus and 226 other cell types or tissues"/>
</dbReference>
<dbReference type="ExpressionAtlas" id="Q80T85">
    <property type="expression patterns" value="baseline and differential"/>
</dbReference>
<dbReference type="GO" id="GO:0080008">
    <property type="term" value="C:Cul4-RING E3 ubiquitin ligase complex"/>
    <property type="evidence" value="ECO:0000250"/>
    <property type="project" value="UniProtKB"/>
</dbReference>
<dbReference type="GO" id="GO:0005739">
    <property type="term" value="C:mitochondrion"/>
    <property type="evidence" value="ECO:0007005"/>
    <property type="project" value="MGI"/>
</dbReference>
<dbReference type="GO" id="GO:0016567">
    <property type="term" value="P:protein ubiquitination"/>
    <property type="evidence" value="ECO:0007669"/>
    <property type="project" value="UniProtKB-UniPathway"/>
</dbReference>
<dbReference type="FunFam" id="2.130.10.10:FF:000297">
    <property type="entry name" value="DDB1- and CUL4-associated factor 5 isoform X1"/>
    <property type="match status" value="1"/>
</dbReference>
<dbReference type="FunFam" id="2.130.10.10:FF:000363">
    <property type="entry name" value="DDB1- and CUL4-associated factor 5 isoform X1"/>
    <property type="match status" value="1"/>
</dbReference>
<dbReference type="Gene3D" id="2.130.10.10">
    <property type="entry name" value="YVTN repeat-like/Quinoprotein amine dehydrogenase"/>
    <property type="match status" value="3"/>
</dbReference>
<dbReference type="InterPro" id="IPR045151">
    <property type="entry name" value="DCAF8"/>
</dbReference>
<dbReference type="InterPro" id="IPR015943">
    <property type="entry name" value="WD40/YVTN_repeat-like_dom_sf"/>
</dbReference>
<dbReference type="InterPro" id="IPR036322">
    <property type="entry name" value="WD40_repeat_dom_sf"/>
</dbReference>
<dbReference type="InterPro" id="IPR001680">
    <property type="entry name" value="WD40_rpt"/>
</dbReference>
<dbReference type="PANTHER" id="PTHR15574:SF43">
    <property type="entry name" value="DDB1- AND CUL4-ASSOCIATED FACTOR 5"/>
    <property type="match status" value="1"/>
</dbReference>
<dbReference type="PANTHER" id="PTHR15574">
    <property type="entry name" value="WD REPEAT DOMAIN-CONTAINING FAMILY"/>
    <property type="match status" value="1"/>
</dbReference>
<dbReference type="Pfam" id="PF00400">
    <property type="entry name" value="WD40"/>
    <property type="match status" value="4"/>
</dbReference>
<dbReference type="SMART" id="SM00320">
    <property type="entry name" value="WD40"/>
    <property type="match status" value="6"/>
</dbReference>
<dbReference type="SUPFAM" id="SSF50978">
    <property type="entry name" value="WD40 repeat-like"/>
    <property type="match status" value="1"/>
</dbReference>
<dbReference type="PROSITE" id="PS50082">
    <property type="entry name" value="WD_REPEATS_2"/>
    <property type="match status" value="3"/>
</dbReference>
<dbReference type="PROSITE" id="PS50294">
    <property type="entry name" value="WD_REPEATS_REGION"/>
    <property type="match status" value="1"/>
</dbReference>
<feature type="chain" id="PRO_0000051370" description="DDB1- and CUL4-associated factor 5">
    <location>
        <begin position="1"/>
        <end position="946"/>
    </location>
</feature>
<feature type="repeat" description="WD 1">
    <location>
        <begin position="51"/>
        <end position="91"/>
    </location>
</feature>
<feature type="repeat" description="WD 2">
    <location>
        <begin position="99"/>
        <end position="139"/>
    </location>
</feature>
<feature type="repeat" description="WD 3">
    <location>
        <begin position="140"/>
        <end position="180"/>
    </location>
</feature>
<feature type="repeat" description="WD 4">
    <location>
        <begin position="185"/>
        <end position="225"/>
    </location>
</feature>
<feature type="repeat" description="WD 5">
    <location>
        <begin position="277"/>
        <end position="317"/>
    </location>
</feature>
<feature type="repeat" description="WD 6">
    <location>
        <begin position="331"/>
        <end position="370"/>
    </location>
</feature>
<feature type="region of interest" description="Disordered" evidence="2">
    <location>
        <begin position="449"/>
        <end position="478"/>
    </location>
</feature>
<feature type="region of interest" description="Disordered" evidence="2">
    <location>
        <begin position="527"/>
        <end position="656"/>
    </location>
</feature>
<feature type="region of interest" description="Disordered" evidence="2">
    <location>
        <begin position="675"/>
        <end position="860"/>
    </location>
</feature>
<feature type="region of interest" description="Disordered" evidence="2">
    <location>
        <begin position="894"/>
        <end position="946"/>
    </location>
</feature>
<feature type="compositionally biased region" description="Polar residues" evidence="2">
    <location>
        <begin position="454"/>
        <end position="465"/>
    </location>
</feature>
<feature type="compositionally biased region" description="Acidic residues" evidence="2">
    <location>
        <begin position="531"/>
        <end position="544"/>
    </location>
</feature>
<feature type="compositionally biased region" description="Low complexity" evidence="2">
    <location>
        <begin position="555"/>
        <end position="567"/>
    </location>
</feature>
<feature type="compositionally biased region" description="Basic residues" evidence="2">
    <location>
        <begin position="579"/>
        <end position="592"/>
    </location>
</feature>
<feature type="compositionally biased region" description="Low complexity" evidence="2">
    <location>
        <begin position="625"/>
        <end position="638"/>
    </location>
</feature>
<feature type="compositionally biased region" description="Basic and acidic residues" evidence="2">
    <location>
        <begin position="691"/>
        <end position="701"/>
    </location>
</feature>
<feature type="compositionally biased region" description="Polar residues" evidence="2">
    <location>
        <begin position="760"/>
        <end position="769"/>
    </location>
</feature>
<feature type="compositionally biased region" description="Polar residues" evidence="2">
    <location>
        <begin position="808"/>
        <end position="819"/>
    </location>
</feature>
<feature type="modified residue" description="Phosphothreonine" evidence="5">
    <location>
        <position position="500"/>
    </location>
</feature>
<feature type="modified residue" description="Phosphoserine" evidence="5">
    <location>
        <position position="531"/>
    </location>
</feature>
<feature type="modified residue" description="Phosphoserine" evidence="5">
    <location>
        <position position="533"/>
    </location>
</feature>
<feature type="modified residue" description="Phosphoserine" evidence="5">
    <location>
        <position position="626"/>
    </location>
</feature>
<feature type="modified residue" description="Phosphoserine" evidence="5">
    <location>
        <position position="628"/>
    </location>
</feature>
<feature type="modified residue" description="Phosphoserine" evidence="1">
    <location>
        <position position="645"/>
    </location>
</feature>
<feature type="sequence conflict" description="In Ref. 3; BAC28784." evidence="4" ref="3">
    <original>R</original>
    <variation>L</variation>
    <location>
        <position position="509"/>
    </location>
</feature>
<feature type="sequence conflict" description="In Ref. 2; AAH30857." evidence="4" ref="2">
    <original>NESDSEENVC</original>
    <variation>RTRGSTHASG</variation>
    <location>
        <begin position="529"/>
        <end position="538"/>
    </location>
</feature>
<feature type="sequence conflict" description="In Ref. 3; BAC28784." evidence="4" ref="3">
    <original>A</original>
    <variation>T</variation>
    <location>
        <position position="694"/>
    </location>
</feature>
<feature type="sequence conflict" description="In Ref. 3; BAC28784." evidence="4" ref="3">
    <original>ALSSRA</original>
    <variation>GREQSG</variation>
    <location>
        <begin position="788"/>
        <end position="793"/>
    </location>
</feature>
<feature type="sequence conflict" description="In Ref. 2; AAH30857." evidence="4" ref="2">
    <original>A</original>
    <variation>T</variation>
    <location>
        <position position="798"/>
    </location>
</feature>
<sequence>MKRRAGLGGSMRSVVGFLSQRGLHGDPLLTQDFQRRRLRGCRNLYKKDLLGHFGCVNAIEFSNNGGQWLVSGGDDRRVLLWHMEQAIHSRVKPIQLKGEHHSNIFCLAFNSGNTKVFSGGNDEQVILHDVESSETLDVFAHEDAVYGLSVSPVNDNIFASSSDDGRVLIWDIRESPHGEPFCLANYPSAFHSVMFNPVEPRLLATANSKEGVGLWDIRKPQSSLLRYGGNLSLQSAMSVRFNSNGTQLLALRRRLPPVLYDIHSRLPVFQFDNQGYFNSCTMKSCCFAGDRDQYILSGSDDFNLYMWKIPADPEAGGIGRVVNGAFMVLKGHRSIVNQVRFNPHTYMICSSGVEKIIKIWSPYKQPGCTGDLDGRIEDDSRCLYTHEEYISLVLNSGSGLSHDYANQSVQEDPRMMAFFDSLVRREIEGWSSDSDSDLSESTILQLHAGVSERSGYTDSESSASLPRSPPPTVDESADNAFHLGPLRVTTTNAVASTPATPTCEDASSRQQRLSALRRYQDKRLLALSNESDSEENVCEAELDTDLFPRPRSPSPEDGSSSPSSSTSSEDEEELNQRRATTRQRNAMRRRQKTARDERPTGPAKSTNTYIGEDNYDYPQIKVDDLSPSPDSSPERSASTLDVQPSRAPPAANMESVERKIYKAYKWLRCSYISYSNNKDGETSLMAEEADEGRAGTSHKDNPTPSSSKEACLTATAQRDQDLPSEGCSSDACKEGTSAGNPNSGAGHEHSSHPWAEVPEGTSQDTNNSGPLEHSFETKKLNGKALSKALSSRAEEPPASPGPKASGSTLNSASGNCPRTQSDDSEERSLDTVCANHNNGRLHPRPLHPHNNGQSSGELETVACSSPGHLDTDHDSPSLTGTFLHKDCCGSEMACETPSAGMREDPPDPSGLDSSKVVHGQSGLKRHRIELEDTESENSSSEKKLKT</sequence>
<reference key="1">
    <citation type="journal article" date="2003" name="DNA Res.">
        <title>Prediction of the coding sequences of mouse homologues of KIAA gene: II. The complete nucleotide sequences of 400 mouse KIAA-homologous cDNAs identified by screening of terminal sequences of cDNA clones randomly sampled from size-fractionated libraries.</title>
        <authorList>
            <person name="Okazaki N."/>
            <person name="Kikuno R."/>
            <person name="Ohara R."/>
            <person name="Inamoto S."/>
            <person name="Aizawa H."/>
            <person name="Yuasa S."/>
            <person name="Nakajima D."/>
            <person name="Nagase T."/>
            <person name="Ohara O."/>
            <person name="Koga H."/>
        </authorList>
    </citation>
    <scope>NUCLEOTIDE SEQUENCE [LARGE SCALE MRNA]</scope>
    <source>
        <tissue>Brain</tissue>
    </source>
</reference>
<reference key="2">
    <citation type="journal article" date="2004" name="Genome Res.">
        <title>The status, quality, and expansion of the NIH full-length cDNA project: the Mammalian Gene Collection (MGC).</title>
        <authorList>
            <consortium name="The MGC Project Team"/>
        </authorList>
    </citation>
    <scope>NUCLEOTIDE SEQUENCE [LARGE SCALE MRNA]</scope>
    <source>
        <strain>C57BL/6J</strain>
        <strain>FVB/N</strain>
        <tissue>Brain</tissue>
        <tissue>Eye</tissue>
        <tissue>Liver</tissue>
    </source>
</reference>
<reference key="3">
    <citation type="journal article" date="2005" name="Science">
        <title>The transcriptional landscape of the mammalian genome.</title>
        <authorList>
            <person name="Carninci P."/>
            <person name="Kasukawa T."/>
            <person name="Katayama S."/>
            <person name="Gough J."/>
            <person name="Frith M.C."/>
            <person name="Maeda N."/>
            <person name="Oyama R."/>
            <person name="Ravasi T."/>
            <person name="Lenhard B."/>
            <person name="Wells C."/>
            <person name="Kodzius R."/>
            <person name="Shimokawa K."/>
            <person name="Bajic V.B."/>
            <person name="Brenner S.E."/>
            <person name="Batalov S."/>
            <person name="Forrest A.R."/>
            <person name="Zavolan M."/>
            <person name="Davis M.J."/>
            <person name="Wilming L.G."/>
            <person name="Aidinis V."/>
            <person name="Allen J.E."/>
            <person name="Ambesi-Impiombato A."/>
            <person name="Apweiler R."/>
            <person name="Aturaliya R.N."/>
            <person name="Bailey T.L."/>
            <person name="Bansal M."/>
            <person name="Baxter L."/>
            <person name="Beisel K.W."/>
            <person name="Bersano T."/>
            <person name="Bono H."/>
            <person name="Chalk A.M."/>
            <person name="Chiu K.P."/>
            <person name="Choudhary V."/>
            <person name="Christoffels A."/>
            <person name="Clutterbuck D.R."/>
            <person name="Crowe M.L."/>
            <person name="Dalla E."/>
            <person name="Dalrymple B.P."/>
            <person name="de Bono B."/>
            <person name="Della Gatta G."/>
            <person name="di Bernardo D."/>
            <person name="Down T."/>
            <person name="Engstrom P."/>
            <person name="Fagiolini M."/>
            <person name="Faulkner G."/>
            <person name="Fletcher C.F."/>
            <person name="Fukushima T."/>
            <person name="Furuno M."/>
            <person name="Futaki S."/>
            <person name="Gariboldi M."/>
            <person name="Georgii-Hemming P."/>
            <person name="Gingeras T.R."/>
            <person name="Gojobori T."/>
            <person name="Green R.E."/>
            <person name="Gustincich S."/>
            <person name="Harbers M."/>
            <person name="Hayashi Y."/>
            <person name="Hensch T.K."/>
            <person name="Hirokawa N."/>
            <person name="Hill D."/>
            <person name="Huminiecki L."/>
            <person name="Iacono M."/>
            <person name="Ikeo K."/>
            <person name="Iwama A."/>
            <person name="Ishikawa T."/>
            <person name="Jakt M."/>
            <person name="Kanapin A."/>
            <person name="Katoh M."/>
            <person name="Kawasawa Y."/>
            <person name="Kelso J."/>
            <person name="Kitamura H."/>
            <person name="Kitano H."/>
            <person name="Kollias G."/>
            <person name="Krishnan S.P."/>
            <person name="Kruger A."/>
            <person name="Kummerfeld S.K."/>
            <person name="Kurochkin I.V."/>
            <person name="Lareau L.F."/>
            <person name="Lazarevic D."/>
            <person name="Lipovich L."/>
            <person name="Liu J."/>
            <person name="Liuni S."/>
            <person name="McWilliam S."/>
            <person name="Madan Babu M."/>
            <person name="Madera M."/>
            <person name="Marchionni L."/>
            <person name="Matsuda H."/>
            <person name="Matsuzawa S."/>
            <person name="Miki H."/>
            <person name="Mignone F."/>
            <person name="Miyake S."/>
            <person name="Morris K."/>
            <person name="Mottagui-Tabar S."/>
            <person name="Mulder N."/>
            <person name="Nakano N."/>
            <person name="Nakauchi H."/>
            <person name="Ng P."/>
            <person name="Nilsson R."/>
            <person name="Nishiguchi S."/>
            <person name="Nishikawa S."/>
            <person name="Nori F."/>
            <person name="Ohara O."/>
            <person name="Okazaki Y."/>
            <person name="Orlando V."/>
            <person name="Pang K.C."/>
            <person name="Pavan W.J."/>
            <person name="Pavesi G."/>
            <person name="Pesole G."/>
            <person name="Petrovsky N."/>
            <person name="Piazza S."/>
            <person name="Reed J."/>
            <person name="Reid J.F."/>
            <person name="Ring B.Z."/>
            <person name="Ringwald M."/>
            <person name="Rost B."/>
            <person name="Ruan Y."/>
            <person name="Salzberg S.L."/>
            <person name="Sandelin A."/>
            <person name="Schneider C."/>
            <person name="Schoenbach C."/>
            <person name="Sekiguchi K."/>
            <person name="Semple C.A."/>
            <person name="Seno S."/>
            <person name="Sessa L."/>
            <person name="Sheng Y."/>
            <person name="Shibata Y."/>
            <person name="Shimada H."/>
            <person name="Shimada K."/>
            <person name="Silva D."/>
            <person name="Sinclair B."/>
            <person name="Sperling S."/>
            <person name="Stupka E."/>
            <person name="Sugiura K."/>
            <person name="Sultana R."/>
            <person name="Takenaka Y."/>
            <person name="Taki K."/>
            <person name="Tammoja K."/>
            <person name="Tan S.L."/>
            <person name="Tang S."/>
            <person name="Taylor M.S."/>
            <person name="Tegner J."/>
            <person name="Teichmann S.A."/>
            <person name="Ueda H.R."/>
            <person name="van Nimwegen E."/>
            <person name="Verardo R."/>
            <person name="Wei C.L."/>
            <person name="Yagi K."/>
            <person name="Yamanishi H."/>
            <person name="Zabarovsky E."/>
            <person name="Zhu S."/>
            <person name="Zimmer A."/>
            <person name="Hide W."/>
            <person name="Bult C."/>
            <person name="Grimmond S.M."/>
            <person name="Teasdale R.D."/>
            <person name="Liu E.T."/>
            <person name="Brusic V."/>
            <person name="Quackenbush J."/>
            <person name="Wahlestedt C."/>
            <person name="Mattick J.S."/>
            <person name="Hume D.A."/>
            <person name="Kai C."/>
            <person name="Sasaki D."/>
            <person name="Tomaru Y."/>
            <person name="Fukuda S."/>
            <person name="Kanamori-Katayama M."/>
            <person name="Suzuki M."/>
            <person name="Aoki J."/>
            <person name="Arakawa T."/>
            <person name="Iida J."/>
            <person name="Imamura K."/>
            <person name="Itoh M."/>
            <person name="Kato T."/>
            <person name="Kawaji H."/>
            <person name="Kawagashira N."/>
            <person name="Kawashima T."/>
            <person name="Kojima M."/>
            <person name="Kondo S."/>
            <person name="Konno H."/>
            <person name="Nakano K."/>
            <person name="Ninomiya N."/>
            <person name="Nishio T."/>
            <person name="Okada M."/>
            <person name="Plessy C."/>
            <person name="Shibata K."/>
            <person name="Shiraki T."/>
            <person name="Suzuki S."/>
            <person name="Tagami M."/>
            <person name="Waki K."/>
            <person name="Watahiki A."/>
            <person name="Okamura-Oho Y."/>
            <person name="Suzuki H."/>
            <person name="Kawai J."/>
            <person name="Hayashizaki Y."/>
        </authorList>
    </citation>
    <scope>NUCLEOTIDE SEQUENCE [LARGE SCALE MRNA] OF 415-946</scope>
    <source>
        <strain>C57BL/6J</strain>
        <tissue>Embryonic testis</tissue>
    </source>
</reference>
<reference key="4">
    <citation type="journal article" date="2010" name="Cell">
        <title>A tissue-specific atlas of mouse protein phosphorylation and expression.</title>
        <authorList>
            <person name="Huttlin E.L."/>
            <person name="Jedrychowski M.P."/>
            <person name="Elias J.E."/>
            <person name="Goswami T."/>
            <person name="Rad R."/>
            <person name="Beausoleil S.A."/>
            <person name="Villen J."/>
            <person name="Haas W."/>
            <person name="Sowa M.E."/>
            <person name="Gygi S.P."/>
        </authorList>
    </citation>
    <scope>PHOSPHORYLATION [LARGE SCALE ANALYSIS] AT THR-500; SER-531; SER-533; SER-626 AND SER-628</scope>
    <scope>IDENTIFICATION BY MASS SPECTROMETRY [LARGE SCALE ANALYSIS]</scope>
    <source>
        <tissue>Brain</tissue>
        <tissue>Kidney</tissue>
        <tissue>Liver</tissue>
        <tissue>Lung</tissue>
        <tissue>Pancreas</tissue>
        <tissue>Spleen</tissue>
        <tissue>Testis</tissue>
    </source>
</reference>
<reference key="5">
    <citation type="journal article" date="2019" name="J. Biol. Chem.">
        <title>Proteolysis of methylated SOX2 protein is regulated by L3MBTL3 and CRL4-DCAF5 ubiquitin ligase.</title>
        <authorList>
            <person name="Zhang C."/>
            <person name="Leng F."/>
            <person name="Saxena L."/>
            <person name="Hoang N."/>
            <person name="Yu J."/>
            <person name="Alejo S."/>
            <person name="Lee L."/>
            <person name="Qi D."/>
            <person name="Lu F."/>
            <person name="Sun H."/>
            <person name="Zhang H."/>
        </authorList>
    </citation>
    <scope>FUNCTION</scope>
    <scope>INTERACTION WITH SOX2 AND L3MBTL3</scope>
</reference>
<gene>
    <name type="primary">Dcaf5</name>
    <name type="synonym">Kiaa1824</name>
    <name type="synonym">Wdr22</name>
</gene>
<proteinExistence type="evidence at protein level"/>
<protein>
    <recommendedName>
        <fullName>DDB1- and CUL4-associated factor 5</fullName>
    </recommendedName>
    <alternativeName>
        <fullName>WD repeat-containing protein 22</fullName>
    </alternativeName>
</protein>
<accession>Q80T85</accession>
<accession>Q80VT3</accession>
<accession>Q80ZW6</accession>
<accession>Q8BIP8</accession>
<accession>Q8BVK5</accession>
<accession>Q8K0Q6</accession>